<sequence length="435" mass="46459">MVDHSAALFNKAQNYMPGGVNSPVRAFGAVGGVPRFIKKASGPYLIDVDEKKYIDYVGSWGPMILGHAHPAVIQAAQEAVQNGLSFGAPCENEIKLAALIGEFMPSIEKVRMVNSGTEATMSALRLARGVTGRSKIIKFEGCYHGHADCLLVNAGSGALTFGMPSSPGVPLGTVQDTLTATFNDLDSVAALFEKYSKDIAAIIVEPIAGNMNLIPAAPDFLTGLRELCNQYGSLLIFDEVITGFRVAKGGAQSLYNIRPDLTALGKIIGGGMPVGAYGGRREIMNQLSPEGPVYQAGTLSGNPVAMAAGLATLKELTAENFYSNLKEKTERLVMGILSRAKAAKIPLTANFSCGVFGLIFTSEERVTRYAQAVNGNVEHFRSFFHKMLDNGVYLAPSAFESGFISAAHTNKEVDKTLDIIENIFSVSETYLRISV</sequence>
<name>GSA_COXBN</name>
<dbReference type="EC" id="5.4.3.8" evidence="1"/>
<dbReference type="EMBL" id="CP000733">
    <property type="protein sequence ID" value="ABS76621.1"/>
    <property type="molecule type" value="Genomic_DNA"/>
</dbReference>
<dbReference type="RefSeq" id="WP_011996416.1">
    <property type="nucleotide sequence ID" value="NC_009727.1"/>
</dbReference>
<dbReference type="SMR" id="A9KBA0"/>
<dbReference type="KEGG" id="cbd:CBUD_0113"/>
<dbReference type="HOGENOM" id="CLU_016922_1_5_6"/>
<dbReference type="UniPathway" id="UPA00251">
    <property type="reaction ID" value="UER00317"/>
</dbReference>
<dbReference type="Proteomes" id="UP000008555">
    <property type="component" value="Chromosome"/>
</dbReference>
<dbReference type="GO" id="GO:0005737">
    <property type="term" value="C:cytoplasm"/>
    <property type="evidence" value="ECO:0007669"/>
    <property type="project" value="UniProtKB-SubCell"/>
</dbReference>
<dbReference type="GO" id="GO:0042286">
    <property type="term" value="F:glutamate-1-semialdehyde 2,1-aminomutase activity"/>
    <property type="evidence" value="ECO:0007669"/>
    <property type="project" value="UniProtKB-UniRule"/>
</dbReference>
<dbReference type="GO" id="GO:0030170">
    <property type="term" value="F:pyridoxal phosphate binding"/>
    <property type="evidence" value="ECO:0007669"/>
    <property type="project" value="InterPro"/>
</dbReference>
<dbReference type="GO" id="GO:0008483">
    <property type="term" value="F:transaminase activity"/>
    <property type="evidence" value="ECO:0007669"/>
    <property type="project" value="InterPro"/>
</dbReference>
<dbReference type="GO" id="GO:0006782">
    <property type="term" value="P:protoporphyrinogen IX biosynthetic process"/>
    <property type="evidence" value="ECO:0007669"/>
    <property type="project" value="UniProtKB-UniRule"/>
</dbReference>
<dbReference type="CDD" id="cd00610">
    <property type="entry name" value="OAT_like"/>
    <property type="match status" value="1"/>
</dbReference>
<dbReference type="FunFam" id="3.40.640.10:FF:000021">
    <property type="entry name" value="Glutamate-1-semialdehyde 2,1-aminomutase"/>
    <property type="match status" value="1"/>
</dbReference>
<dbReference type="Gene3D" id="3.90.1150.10">
    <property type="entry name" value="Aspartate Aminotransferase, domain 1"/>
    <property type="match status" value="1"/>
</dbReference>
<dbReference type="Gene3D" id="3.40.640.10">
    <property type="entry name" value="Type I PLP-dependent aspartate aminotransferase-like (Major domain)"/>
    <property type="match status" value="1"/>
</dbReference>
<dbReference type="HAMAP" id="MF_00375">
    <property type="entry name" value="HemL_aminotrans_3"/>
    <property type="match status" value="1"/>
</dbReference>
<dbReference type="InterPro" id="IPR004639">
    <property type="entry name" value="4pyrrol_synth_GluAld_NH2Trfase"/>
</dbReference>
<dbReference type="InterPro" id="IPR005814">
    <property type="entry name" value="Aminotrans_3"/>
</dbReference>
<dbReference type="InterPro" id="IPR049704">
    <property type="entry name" value="Aminotrans_3_PPA_site"/>
</dbReference>
<dbReference type="InterPro" id="IPR015424">
    <property type="entry name" value="PyrdxlP-dep_Trfase"/>
</dbReference>
<dbReference type="InterPro" id="IPR015421">
    <property type="entry name" value="PyrdxlP-dep_Trfase_major"/>
</dbReference>
<dbReference type="InterPro" id="IPR015422">
    <property type="entry name" value="PyrdxlP-dep_Trfase_small"/>
</dbReference>
<dbReference type="NCBIfam" id="TIGR00713">
    <property type="entry name" value="hemL"/>
    <property type="match status" value="1"/>
</dbReference>
<dbReference type="NCBIfam" id="NF000818">
    <property type="entry name" value="PRK00062.1"/>
    <property type="match status" value="1"/>
</dbReference>
<dbReference type="PANTHER" id="PTHR43713">
    <property type="entry name" value="GLUTAMATE-1-SEMIALDEHYDE 2,1-AMINOMUTASE"/>
    <property type="match status" value="1"/>
</dbReference>
<dbReference type="PANTHER" id="PTHR43713:SF3">
    <property type="entry name" value="GLUTAMATE-1-SEMIALDEHYDE 2,1-AMINOMUTASE 1, CHLOROPLASTIC-RELATED"/>
    <property type="match status" value="1"/>
</dbReference>
<dbReference type="Pfam" id="PF00202">
    <property type="entry name" value="Aminotran_3"/>
    <property type="match status" value="1"/>
</dbReference>
<dbReference type="SUPFAM" id="SSF53383">
    <property type="entry name" value="PLP-dependent transferases"/>
    <property type="match status" value="1"/>
</dbReference>
<dbReference type="PROSITE" id="PS00600">
    <property type="entry name" value="AA_TRANSFER_CLASS_3"/>
    <property type="match status" value="1"/>
</dbReference>
<feature type="chain" id="PRO_1000079919" description="Glutamate-1-semialdehyde 2,1-aminomutase">
    <location>
        <begin position="1"/>
        <end position="435"/>
    </location>
</feature>
<feature type="modified residue" description="N6-(pyridoxal phosphate)lysine" evidence="1">
    <location>
        <position position="266"/>
    </location>
</feature>
<gene>
    <name evidence="1" type="primary">hemL</name>
    <name type="ordered locus">CBUD_0113</name>
</gene>
<evidence type="ECO:0000255" key="1">
    <source>
        <dbReference type="HAMAP-Rule" id="MF_00375"/>
    </source>
</evidence>
<reference key="1">
    <citation type="journal article" date="2009" name="Infect. Immun.">
        <title>Comparative genomics reveal extensive transposon-mediated genomic plasticity and diversity among potential effector proteins within the genus Coxiella.</title>
        <authorList>
            <person name="Beare P.A."/>
            <person name="Unsworth N."/>
            <person name="Andoh M."/>
            <person name="Voth D.E."/>
            <person name="Omsland A."/>
            <person name="Gilk S.D."/>
            <person name="Williams K.P."/>
            <person name="Sobral B.W."/>
            <person name="Kupko J.J. III"/>
            <person name="Porcella S.F."/>
            <person name="Samuel J.E."/>
            <person name="Heinzen R.A."/>
        </authorList>
    </citation>
    <scope>NUCLEOTIDE SEQUENCE [LARGE SCALE GENOMIC DNA]</scope>
    <source>
        <strain>Dugway 5J108-111</strain>
    </source>
</reference>
<organism>
    <name type="scientific">Coxiella burnetii (strain Dugway 5J108-111)</name>
    <dbReference type="NCBI Taxonomy" id="434922"/>
    <lineage>
        <taxon>Bacteria</taxon>
        <taxon>Pseudomonadati</taxon>
        <taxon>Pseudomonadota</taxon>
        <taxon>Gammaproteobacteria</taxon>
        <taxon>Legionellales</taxon>
        <taxon>Coxiellaceae</taxon>
        <taxon>Coxiella</taxon>
    </lineage>
</organism>
<keyword id="KW-0963">Cytoplasm</keyword>
<keyword id="KW-0413">Isomerase</keyword>
<keyword id="KW-0627">Porphyrin biosynthesis</keyword>
<keyword id="KW-0663">Pyridoxal phosphate</keyword>
<accession>A9KBA0</accession>
<comment type="catalytic activity">
    <reaction evidence="1">
        <text>(S)-4-amino-5-oxopentanoate = 5-aminolevulinate</text>
        <dbReference type="Rhea" id="RHEA:14265"/>
        <dbReference type="ChEBI" id="CHEBI:57501"/>
        <dbReference type="ChEBI" id="CHEBI:356416"/>
        <dbReference type="EC" id="5.4.3.8"/>
    </reaction>
</comment>
<comment type="cofactor">
    <cofactor evidence="1">
        <name>pyridoxal 5'-phosphate</name>
        <dbReference type="ChEBI" id="CHEBI:597326"/>
    </cofactor>
</comment>
<comment type="pathway">
    <text evidence="1">Porphyrin-containing compound metabolism; protoporphyrin-IX biosynthesis; 5-aminolevulinate from L-glutamyl-tRNA(Glu): step 2/2.</text>
</comment>
<comment type="subunit">
    <text evidence="1">Homodimer.</text>
</comment>
<comment type="subcellular location">
    <subcellularLocation>
        <location evidence="1">Cytoplasm</location>
    </subcellularLocation>
</comment>
<comment type="similarity">
    <text evidence="1">Belongs to the class-III pyridoxal-phosphate-dependent aminotransferase family. HemL subfamily.</text>
</comment>
<protein>
    <recommendedName>
        <fullName evidence="1">Glutamate-1-semialdehyde 2,1-aminomutase</fullName>
        <shortName evidence="1">GSA</shortName>
        <ecNumber evidence="1">5.4.3.8</ecNumber>
    </recommendedName>
    <alternativeName>
        <fullName evidence="1">Glutamate-1-semialdehyde aminotransferase</fullName>
        <shortName evidence="1">GSA-AT</shortName>
    </alternativeName>
</protein>
<proteinExistence type="inferred from homology"/>